<accession>O67050</accession>
<protein>
    <recommendedName>
        <fullName evidence="1">tRNA-specific adenosine deaminase</fullName>
        <ecNumber evidence="1">3.5.4.33</ecNumber>
    </recommendedName>
</protein>
<reference key="1">
    <citation type="journal article" date="1998" name="Nature">
        <title>The complete genome of the hyperthermophilic bacterium Aquifex aeolicus.</title>
        <authorList>
            <person name="Deckert G."/>
            <person name="Warren P.V."/>
            <person name="Gaasterland T."/>
            <person name="Young W.G."/>
            <person name="Lenox A.L."/>
            <person name="Graham D.E."/>
            <person name="Overbeek R."/>
            <person name="Snead M.A."/>
            <person name="Keller M."/>
            <person name="Aujay M."/>
            <person name="Huber R."/>
            <person name="Feldman R.A."/>
            <person name="Short J.M."/>
            <person name="Olsen G.J."/>
            <person name="Swanson R.V."/>
        </authorList>
    </citation>
    <scope>NUCLEOTIDE SEQUENCE [LARGE SCALE GENOMIC DNA]</scope>
    <source>
        <strain>VF5</strain>
    </source>
</reference>
<reference key="2">
    <citation type="journal article" date="2005" name="J. Biol. Chem.">
        <title>Crystal structure of tRNA adenosine deaminase (TadA) from Aquifex aeolicus.</title>
        <authorList>
            <person name="Kuratani M."/>
            <person name="Ishii R."/>
            <person name="Bessho Y."/>
            <person name="Fukunaga R."/>
            <person name="Sengoku T."/>
            <person name="Shirouzu M."/>
            <person name="Sekine S."/>
            <person name="Yokoyama S."/>
        </authorList>
    </citation>
    <scope>X-RAY CRYSTALLOGRAPHY (1.8 ANGSTROMS) IN COMPLEX WITH ZINC</scope>
    <scope>COFACTOR</scope>
    <scope>SUBUNIT</scope>
</reference>
<organism>
    <name type="scientific">Aquifex aeolicus (strain VF5)</name>
    <dbReference type="NCBI Taxonomy" id="224324"/>
    <lineage>
        <taxon>Bacteria</taxon>
        <taxon>Pseudomonadati</taxon>
        <taxon>Aquificota</taxon>
        <taxon>Aquificia</taxon>
        <taxon>Aquificales</taxon>
        <taxon>Aquificaceae</taxon>
        <taxon>Aquifex</taxon>
    </lineage>
</organism>
<sequence length="151" mass="17246">MGKEYFLKVALREAKRAFEKGEVPVGAIIVKEGEIISKAHNSVEELKDPTAHAEMLAIKEACRRLNTKYLEGCELYVTLEPCIMCSYALVLSRIEKVIFSALDKKHGGVVSVFNILDEPTLNHRVKWEYYPLEEASELLSEFFKKLRNNII</sequence>
<comment type="function">
    <text evidence="1">Catalyzes the deamination of adenosine to inosine at the wobble position 34 of tRNA(Arg2).</text>
</comment>
<comment type="catalytic activity">
    <reaction evidence="1">
        <text>adenosine(34) in tRNA + H2O + H(+) = inosine(34) in tRNA + NH4(+)</text>
        <dbReference type="Rhea" id="RHEA:43168"/>
        <dbReference type="Rhea" id="RHEA-COMP:10373"/>
        <dbReference type="Rhea" id="RHEA-COMP:10374"/>
        <dbReference type="ChEBI" id="CHEBI:15377"/>
        <dbReference type="ChEBI" id="CHEBI:15378"/>
        <dbReference type="ChEBI" id="CHEBI:28938"/>
        <dbReference type="ChEBI" id="CHEBI:74411"/>
        <dbReference type="ChEBI" id="CHEBI:82852"/>
        <dbReference type="EC" id="3.5.4.33"/>
    </reaction>
</comment>
<comment type="cofactor">
    <cofactor evidence="1 3">
        <name>Zn(2+)</name>
        <dbReference type="ChEBI" id="CHEBI:29105"/>
    </cofactor>
    <text evidence="1 3">Binds 1 zinc ion per subunit.</text>
</comment>
<comment type="subunit">
    <text evidence="1 3">Homodimer.</text>
</comment>
<comment type="similarity">
    <text evidence="1">Belongs to the cytidine and deoxycytidylate deaminase family.</text>
</comment>
<evidence type="ECO:0000255" key="1">
    <source>
        <dbReference type="HAMAP-Rule" id="MF_00972"/>
    </source>
</evidence>
<evidence type="ECO:0000255" key="2">
    <source>
        <dbReference type="PROSITE-ProRule" id="PRU01083"/>
    </source>
</evidence>
<evidence type="ECO:0000269" key="3">
    <source>
    </source>
</evidence>
<evidence type="ECO:0007829" key="4">
    <source>
        <dbReference type="PDB" id="1WWR"/>
    </source>
</evidence>
<dbReference type="EC" id="3.5.4.33" evidence="1"/>
<dbReference type="EMBL" id="AE000657">
    <property type="protein sequence ID" value="AAC07025.1"/>
    <property type="molecule type" value="Genomic_DNA"/>
</dbReference>
<dbReference type="PIR" id="G70377">
    <property type="entry name" value="G70377"/>
</dbReference>
<dbReference type="RefSeq" id="NP_213612.1">
    <property type="nucleotide sequence ID" value="NC_000918.1"/>
</dbReference>
<dbReference type="RefSeq" id="WP_010880550.1">
    <property type="nucleotide sequence ID" value="NC_000918.1"/>
</dbReference>
<dbReference type="PDB" id="1WWR">
    <property type="method" value="X-ray"/>
    <property type="resolution" value="1.80 A"/>
    <property type="chains" value="A/B/C/D=1-151"/>
</dbReference>
<dbReference type="PDBsum" id="1WWR"/>
<dbReference type="SMR" id="O67050"/>
<dbReference type="FunCoup" id="O67050">
    <property type="interactions" value="321"/>
</dbReference>
<dbReference type="STRING" id="224324.aq_903"/>
<dbReference type="EnsemblBacteria" id="AAC07025">
    <property type="protein sequence ID" value="AAC07025"/>
    <property type="gene ID" value="aq_903"/>
</dbReference>
<dbReference type="KEGG" id="aae:aq_903"/>
<dbReference type="PATRIC" id="fig|224324.8.peg.704"/>
<dbReference type="eggNOG" id="COG0590">
    <property type="taxonomic scope" value="Bacteria"/>
</dbReference>
<dbReference type="HOGENOM" id="CLU_025810_3_2_0"/>
<dbReference type="InParanoid" id="O67050"/>
<dbReference type="OrthoDB" id="9802676at2"/>
<dbReference type="BRENDA" id="3.5.4.33">
    <property type="organism ID" value="396"/>
</dbReference>
<dbReference type="EvolutionaryTrace" id="O67050"/>
<dbReference type="Proteomes" id="UP000000798">
    <property type="component" value="Chromosome"/>
</dbReference>
<dbReference type="GO" id="GO:0052717">
    <property type="term" value="F:tRNA-specific adenosine-34 deaminase activity"/>
    <property type="evidence" value="ECO:0000318"/>
    <property type="project" value="GO_Central"/>
</dbReference>
<dbReference type="GO" id="GO:0008270">
    <property type="term" value="F:zinc ion binding"/>
    <property type="evidence" value="ECO:0007669"/>
    <property type="project" value="UniProtKB-UniRule"/>
</dbReference>
<dbReference type="GO" id="GO:0002100">
    <property type="term" value="P:tRNA wobble adenosine to inosine editing"/>
    <property type="evidence" value="ECO:0000318"/>
    <property type="project" value="GO_Central"/>
</dbReference>
<dbReference type="CDD" id="cd01285">
    <property type="entry name" value="nucleoside_deaminase"/>
    <property type="match status" value="1"/>
</dbReference>
<dbReference type="FunFam" id="3.40.140.10:FF:000038">
    <property type="entry name" value="tRNA-specific adenosine deaminase"/>
    <property type="match status" value="1"/>
</dbReference>
<dbReference type="Gene3D" id="3.40.140.10">
    <property type="entry name" value="Cytidine Deaminase, domain 2"/>
    <property type="match status" value="1"/>
</dbReference>
<dbReference type="HAMAP" id="MF_00972">
    <property type="entry name" value="tRNA_aden_deaminase"/>
    <property type="match status" value="1"/>
</dbReference>
<dbReference type="InterPro" id="IPR016192">
    <property type="entry name" value="APOBEC/CMP_deaminase_Zn-bd"/>
</dbReference>
<dbReference type="InterPro" id="IPR002125">
    <property type="entry name" value="CMP_dCMP_dom"/>
</dbReference>
<dbReference type="InterPro" id="IPR016193">
    <property type="entry name" value="Cytidine_deaminase-like"/>
</dbReference>
<dbReference type="InterPro" id="IPR028883">
    <property type="entry name" value="tRNA_aden_deaminase"/>
</dbReference>
<dbReference type="PANTHER" id="PTHR11079">
    <property type="entry name" value="CYTOSINE DEAMINASE FAMILY MEMBER"/>
    <property type="match status" value="1"/>
</dbReference>
<dbReference type="PANTHER" id="PTHR11079:SF202">
    <property type="entry name" value="TRNA-SPECIFIC ADENOSINE DEAMINASE"/>
    <property type="match status" value="1"/>
</dbReference>
<dbReference type="Pfam" id="PF14437">
    <property type="entry name" value="MafB19-deam"/>
    <property type="match status" value="1"/>
</dbReference>
<dbReference type="SUPFAM" id="SSF53927">
    <property type="entry name" value="Cytidine deaminase-like"/>
    <property type="match status" value="1"/>
</dbReference>
<dbReference type="PROSITE" id="PS00903">
    <property type="entry name" value="CYT_DCMP_DEAMINASES_1"/>
    <property type="match status" value="1"/>
</dbReference>
<dbReference type="PROSITE" id="PS51747">
    <property type="entry name" value="CYT_DCMP_DEAMINASES_2"/>
    <property type="match status" value="1"/>
</dbReference>
<name>TADA_AQUAE</name>
<feature type="chain" id="PRO_0000171732" description="tRNA-specific adenosine deaminase">
    <location>
        <begin position="1"/>
        <end position="151"/>
    </location>
</feature>
<feature type="domain" description="CMP/dCMP-type deaminase" evidence="2">
    <location>
        <begin position="1"/>
        <end position="111"/>
    </location>
</feature>
<feature type="active site" description="Proton donor" evidence="1">
    <location>
        <position position="54"/>
    </location>
</feature>
<feature type="binding site" evidence="1 3">
    <location>
        <position position="52"/>
    </location>
    <ligand>
        <name>Zn(2+)</name>
        <dbReference type="ChEBI" id="CHEBI:29105"/>
        <note>catalytic</note>
    </ligand>
</feature>
<feature type="binding site" evidence="1 3">
    <location>
        <position position="82"/>
    </location>
    <ligand>
        <name>Zn(2+)</name>
        <dbReference type="ChEBI" id="CHEBI:29105"/>
        <note>catalytic</note>
    </ligand>
</feature>
<feature type="binding site" evidence="1 3">
    <location>
        <position position="85"/>
    </location>
    <ligand>
        <name>Zn(2+)</name>
        <dbReference type="ChEBI" id="CHEBI:29105"/>
        <note>catalytic</note>
    </ligand>
</feature>
<feature type="helix" evidence="4">
    <location>
        <begin position="3"/>
        <end position="19"/>
    </location>
</feature>
<feature type="strand" evidence="4">
    <location>
        <begin position="26"/>
        <end position="31"/>
    </location>
</feature>
<feature type="strand" evidence="4">
    <location>
        <begin position="34"/>
        <end position="40"/>
    </location>
</feature>
<feature type="helix" evidence="4">
    <location>
        <begin position="43"/>
        <end position="46"/>
    </location>
</feature>
<feature type="helix" evidence="4">
    <location>
        <begin position="53"/>
        <end position="65"/>
    </location>
</feature>
<feature type="strand" evidence="4">
    <location>
        <begin position="73"/>
        <end position="79"/>
    </location>
</feature>
<feature type="helix" evidence="4">
    <location>
        <begin position="83"/>
        <end position="91"/>
    </location>
</feature>
<feature type="strand" evidence="4">
    <location>
        <begin position="95"/>
        <end position="101"/>
    </location>
</feature>
<feature type="turn" evidence="4">
    <location>
        <begin position="104"/>
        <end position="106"/>
    </location>
</feature>
<feature type="turn" evidence="4">
    <location>
        <begin position="108"/>
        <end position="111"/>
    </location>
</feature>
<feature type="helix" evidence="4">
    <location>
        <begin position="115"/>
        <end position="117"/>
    </location>
</feature>
<feature type="strand" evidence="4">
    <location>
        <begin position="126"/>
        <end position="129"/>
    </location>
</feature>
<feature type="helix" evidence="4">
    <location>
        <begin position="133"/>
        <end position="148"/>
    </location>
</feature>
<gene>
    <name evidence="1" type="primary">tadA</name>
    <name type="ordered locus">aq_903</name>
</gene>
<proteinExistence type="evidence at protein level"/>
<keyword id="KW-0002">3D-structure</keyword>
<keyword id="KW-0378">Hydrolase</keyword>
<keyword id="KW-0479">Metal-binding</keyword>
<keyword id="KW-1185">Reference proteome</keyword>
<keyword id="KW-0819">tRNA processing</keyword>
<keyword id="KW-0862">Zinc</keyword>